<gene>
    <name type="primary">ajap1</name>
</gene>
<keyword id="KW-0130">Cell adhesion</keyword>
<keyword id="KW-0965">Cell junction</keyword>
<keyword id="KW-1003">Cell membrane</keyword>
<keyword id="KW-0472">Membrane</keyword>
<keyword id="KW-1185">Reference proteome</keyword>
<keyword id="KW-0732">Signal</keyword>
<keyword id="KW-0812">Transmembrane</keyword>
<keyword id="KW-1133">Transmembrane helix</keyword>
<accession>Q0IIY7</accession>
<proteinExistence type="evidence at transcript level"/>
<name>AJAP1_XENTR</name>
<comment type="function">
    <text evidence="1">May play a role in cell adhesion and cell migration.</text>
</comment>
<comment type="subcellular location">
    <subcellularLocation>
        <location evidence="2">Basolateral cell membrane</location>
        <topology evidence="3">Single-pass type I membrane protein</topology>
    </subcellularLocation>
    <subcellularLocation>
        <location evidence="2">Apical cell membrane</location>
        <topology evidence="3">Single-pass type I membrane protein</topology>
    </subcellularLocation>
    <subcellularLocation>
        <location evidence="2">Cell junction</location>
        <location evidence="2">Adherens junction</location>
    </subcellularLocation>
    <text evidence="2">Mainly basolateral.</text>
</comment>
<reference key="1">
    <citation type="submission" date="2006-08" db="EMBL/GenBank/DDBJ databases">
        <authorList>
            <consortium name="NIH - Xenopus Gene Collection (XGC) project"/>
        </authorList>
    </citation>
    <scope>NUCLEOTIDE SEQUENCE [LARGE SCALE MRNA]</scope>
    <source>
        <tissue>Brain</tissue>
    </source>
</reference>
<organism>
    <name type="scientific">Xenopus tropicalis</name>
    <name type="common">Western clawed frog</name>
    <name type="synonym">Silurana tropicalis</name>
    <dbReference type="NCBI Taxonomy" id="8364"/>
    <lineage>
        <taxon>Eukaryota</taxon>
        <taxon>Metazoa</taxon>
        <taxon>Chordata</taxon>
        <taxon>Craniata</taxon>
        <taxon>Vertebrata</taxon>
        <taxon>Euteleostomi</taxon>
        <taxon>Amphibia</taxon>
        <taxon>Batrachia</taxon>
        <taxon>Anura</taxon>
        <taxon>Pipoidea</taxon>
        <taxon>Pipidae</taxon>
        <taxon>Xenopodinae</taxon>
        <taxon>Xenopus</taxon>
        <taxon>Silurana</taxon>
    </lineage>
</organism>
<evidence type="ECO:0000250" key="1"/>
<evidence type="ECO:0000250" key="2">
    <source>
        <dbReference type="UniProtKB" id="Q9UKB5"/>
    </source>
</evidence>
<evidence type="ECO:0000255" key="3"/>
<evidence type="ECO:0000256" key="4">
    <source>
        <dbReference type="SAM" id="MobiDB-lite"/>
    </source>
</evidence>
<sequence>MWITQLLGIRSGPPLGSHAWILIAIFQLAMDFIICESESPGKAYKHLQRPSLVRRVHKVALWSPTELLKLRNQKQFWNPINNEHPVLPIERKHYKTYHENLFFSRNVPLKYSTMKNSHYSSQQIKHTVKTTNLNRSKRQLQSRSWDNLKRFLDSGSQPTTVSEFILWGPTGDDDVESSTFPGIYETTRTSTVHARTTLLETTTTTTASTTTNVKVTTLQNPGIHNGKKSPGRISTTDPNPGNGKTARPPRIPNDTSGLAVHQIITITVSLIMVIAALITTLVLKNCCAQSGNARRNSHQRKINQQEESCQNLTDFTPASVPSNMDIFTAYNETLHCSHECIRTPVPVYTDEALHQTGAFKTTFNGNRPTSSDRHLIPVAFVSEKWFEISC</sequence>
<protein>
    <recommendedName>
        <fullName>Adherens junction-associated protein 1</fullName>
    </recommendedName>
</protein>
<feature type="signal peptide" evidence="3">
    <location>
        <begin position="1"/>
        <end position="37"/>
    </location>
</feature>
<feature type="chain" id="PRO_0000284804" description="Adherens junction-associated protein 1" evidence="3">
    <location>
        <begin position="38"/>
        <end position="390"/>
    </location>
</feature>
<feature type="topological domain" description="Extracellular" evidence="3">
    <location>
        <begin position="38"/>
        <end position="262"/>
    </location>
</feature>
<feature type="transmembrane region" description="Helical" evidence="3">
    <location>
        <begin position="263"/>
        <end position="283"/>
    </location>
</feature>
<feature type="topological domain" description="Cytoplasmic" evidence="3">
    <location>
        <begin position="284"/>
        <end position="390"/>
    </location>
</feature>
<feature type="region of interest" description="Disordered" evidence="4">
    <location>
        <begin position="218"/>
        <end position="253"/>
    </location>
</feature>
<feature type="region of interest" description="Targeting signals" evidence="1">
    <location>
        <begin position="283"/>
        <end position="390"/>
    </location>
</feature>
<dbReference type="EMBL" id="BC121464">
    <property type="protein sequence ID" value="AAI21465.1"/>
    <property type="molecule type" value="mRNA"/>
</dbReference>
<dbReference type="RefSeq" id="NP_001072363.1">
    <property type="nucleotide sequence ID" value="NM_001078895.1"/>
</dbReference>
<dbReference type="FunCoup" id="Q0IIY7">
    <property type="interactions" value="221"/>
</dbReference>
<dbReference type="STRING" id="8364.ENSXETP00000034168"/>
<dbReference type="PaxDb" id="8364-ENSXETP00000033497"/>
<dbReference type="DNASU" id="779816"/>
<dbReference type="GeneID" id="779816"/>
<dbReference type="KEGG" id="xtr:779816"/>
<dbReference type="AGR" id="Xenbase:XB-GENE-990276"/>
<dbReference type="CTD" id="55966"/>
<dbReference type="Xenbase" id="XB-GENE-990276">
    <property type="gene designation" value="ajap1"/>
</dbReference>
<dbReference type="eggNOG" id="ENOG502QVMU">
    <property type="taxonomic scope" value="Eukaryota"/>
</dbReference>
<dbReference type="InParanoid" id="Q0IIY7"/>
<dbReference type="OrthoDB" id="9949932at2759"/>
<dbReference type="Proteomes" id="UP000008143">
    <property type="component" value="Chromosome 7"/>
</dbReference>
<dbReference type="GO" id="GO:0005912">
    <property type="term" value="C:adherens junction"/>
    <property type="evidence" value="ECO:0007669"/>
    <property type="project" value="UniProtKB-SubCell"/>
</dbReference>
<dbReference type="GO" id="GO:0016324">
    <property type="term" value="C:apical plasma membrane"/>
    <property type="evidence" value="ECO:0007669"/>
    <property type="project" value="UniProtKB-SubCell"/>
</dbReference>
<dbReference type="GO" id="GO:0016323">
    <property type="term" value="C:basolateral plasma membrane"/>
    <property type="evidence" value="ECO:0007669"/>
    <property type="project" value="UniProtKB-SubCell"/>
</dbReference>
<dbReference type="GO" id="GO:0007155">
    <property type="term" value="P:cell adhesion"/>
    <property type="evidence" value="ECO:0007669"/>
    <property type="project" value="UniProtKB-KW"/>
</dbReference>
<dbReference type="InterPro" id="IPR039239">
    <property type="entry name" value="AJAP1"/>
</dbReference>
<dbReference type="InterPro" id="IPR029198">
    <property type="entry name" value="AJAP1_PANP_C"/>
</dbReference>
<dbReference type="PANTHER" id="PTHR32422">
    <property type="entry name" value="ADHERENS JUNCTION-ASSOCIATED PROTEIN 1"/>
    <property type="match status" value="1"/>
</dbReference>
<dbReference type="PANTHER" id="PTHR32422:SF0">
    <property type="entry name" value="ADHERENS JUNCTION-ASSOCIATED PROTEIN 1"/>
    <property type="match status" value="1"/>
</dbReference>
<dbReference type="Pfam" id="PF15298">
    <property type="entry name" value="AJAP1_PANP_C"/>
    <property type="match status" value="1"/>
</dbReference>